<keyword id="KW-0002">3D-structure</keyword>
<keyword id="KW-0249">Electron transport</keyword>
<keyword id="KW-0472">Membrane</keyword>
<keyword id="KW-0496">Mitochondrion</keyword>
<keyword id="KW-0999">Mitochondrion inner membrane</keyword>
<keyword id="KW-0520">NAD</keyword>
<keyword id="KW-1185">Reference proteome</keyword>
<keyword id="KW-0679">Respiratory chain</keyword>
<keyword id="KW-1278">Translocase</keyword>
<keyword id="KW-0812">Transmembrane</keyword>
<keyword id="KW-1133">Transmembrane helix</keyword>
<keyword id="KW-0813">Transport</keyword>
<keyword id="KW-0830">Ubiquinone</keyword>
<reference key="1">
    <citation type="journal article" date="1981" name="Cell">
        <title>Sequence and gene organization of mouse mitochondrial DNA.</title>
        <authorList>
            <person name="Bibb M.J."/>
            <person name="van Etten R.A."/>
            <person name="Wright C.T."/>
            <person name="Walberg M.W."/>
            <person name="Clayton D.A."/>
        </authorList>
    </citation>
    <scope>NUCLEOTIDE SEQUENCE [GENOMIC DNA]</scope>
</reference>
<reference key="2">
    <citation type="journal article" date="2003" name="Nucleic Acids Res.">
        <title>Revisiting the mouse mitochondrial DNA sequence.</title>
        <authorList>
            <person name="Bayona-Bafaluy M.P."/>
            <person name="Acin-Perez R."/>
            <person name="Mullikin J.C."/>
            <person name="Park J.S."/>
            <person name="Moreno-Loshuertos R."/>
            <person name="Hu P."/>
            <person name="Perez-Martos A."/>
            <person name="Fernandez-Silva P."/>
            <person name="Bai Y."/>
            <person name="Enriquez J.A."/>
        </authorList>
    </citation>
    <scope>NUCLEOTIDE SEQUENCE [LARGE SCALE GENOMIC DNA]</scope>
    <source>
        <strain>C57BL/6J</strain>
    </source>
</reference>
<reference key="3">
    <citation type="journal article" date="2010" name="Cell">
        <title>A tissue-specific atlas of mouse protein phosphorylation and expression.</title>
        <authorList>
            <person name="Huttlin E.L."/>
            <person name="Jedrychowski M.P."/>
            <person name="Elias J.E."/>
            <person name="Goswami T."/>
            <person name="Rad R."/>
            <person name="Beausoleil S.A."/>
            <person name="Villen J."/>
            <person name="Haas W."/>
            <person name="Sowa M.E."/>
            <person name="Gygi S.P."/>
        </authorList>
    </citation>
    <scope>IDENTIFICATION BY MASS SPECTROMETRY [LARGE SCALE ANALYSIS]</scope>
    <source>
        <tissue>Brain</tissue>
        <tissue>Brown adipose tissue</tissue>
        <tissue>Heart</tissue>
        <tissue>Kidney</tissue>
        <tissue>Liver</tissue>
        <tissue>Lung</tissue>
        <tissue>Spleen</tissue>
        <tissue>Testis</tissue>
    </source>
</reference>
<reference evidence="5" key="4">
    <citation type="journal article" date="2024" name="Nat. Struct. Mol. Biol.">
        <title>SCAF1 drives the compositional diversity of mammalian respirasomes.</title>
        <authorList>
            <person name="Vercellino I."/>
            <person name="Sazanov L.A."/>
        </authorList>
    </citation>
    <scope>STRUCTURE BY ELECTRON MICROSCOPY (3.60 ANGSTROMS) IN COMPLEX WITH MITOCHONDRIAL RESPIRATORY SUPERCOMPLEX</scope>
    <scope>FUNCTION</scope>
    <scope>SUBCELLULAR LOCATION</scope>
    <scope>SUBUNIT</scope>
</reference>
<name>NU5M_MOUSE</name>
<organism>
    <name type="scientific">Mus musculus</name>
    <name type="common">Mouse</name>
    <dbReference type="NCBI Taxonomy" id="10090"/>
    <lineage>
        <taxon>Eukaryota</taxon>
        <taxon>Metazoa</taxon>
        <taxon>Chordata</taxon>
        <taxon>Craniata</taxon>
        <taxon>Vertebrata</taxon>
        <taxon>Euteleostomi</taxon>
        <taxon>Mammalia</taxon>
        <taxon>Eutheria</taxon>
        <taxon>Euarchontoglires</taxon>
        <taxon>Glires</taxon>
        <taxon>Rodentia</taxon>
        <taxon>Myomorpha</taxon>
        <taxon>Muroidea</taxon>
        <taxon>Muridae</taxon>
        <taxon>Murinae</taxon>
        <taxon>Mus</taxon>
        <taxon>Mus</taxon>
    </lineage>
</organism>
<accession>P03921</accession>
<comment type="function">
    <text evidence="1 3">Core subunit of the mitochondrial membrane respiratory chain NADH dehydrogenase (Complex I) which catalyzes electron transfer from NADH through the respiratory chain, using ubiquinone as an electron acceptor (PubMed:38575788). Essential for the catalytic activity and assembly of complex I (By similarity).</text>
</comment>
<comment type="catalytic activity">
    <reaction evidence="1">
        <text>a ubiquinone + NADH + 5 H(+)(in) = a ubiquinol + NAD(+) + 4 H(+)(out)</text>
        <dbReference type="Rhea" id="RHEA:29091"/>
        <dbReference type="Rhea" id="RHEA-COMP:9565"/>
        <dbReference type="Rhea" id="RHEA-COMP:9566"/>
        <dbReference type="ChEBI" id="CHEBI:15378"/>
        <dbReference type="ChEBI" id="CHEBI:16389"/>
        <dbReference type="ChEBI" id="CHEBI:17976"/>
        <dbReference type="ChEBI" id="CHEBI:57540"/>
        <dbReference type="ChEBI" id="CHEBI:57945"/>
        <dbReference type="EC" id="7.1.1.2"/>
    </reaction>
</comment>
<comment type="subunit">
    <text evidence="3">Core subunit of respiratory chain NADH dehydrogenase (Complex I) which is composed of 45 different subunits.</text>
</comment>
<comment type="subcellular location">
    <subcellularLocation>
        <location evidence="3">Mitochondrion inner membrane</location>
        <topology evidence="2">Multi-pass membrane protein</topology>
    </subcellularLocation>
</comment>
<comment type="similarity">
    <text evidence="4">Belongs to the complex I subunit 5 family.</text>
</comment>
<geneLocation type="mitochondrion"/>
<protein>
    <recommendedName>
        <fullName>NADH-ubiquinone oxidoreductase chain 5</fullName>
        <ecNumber evidence="1">7.1.1.2</ecNumber>
    </recommendedName>
    <alternativeName>
        <fullName>NADH dehydrogenase subunit 5</fullName>
    </alternativeName>
</protein>
<feature type="chain" id="PRO_0000118114" description="NADH-ubiquinone oxidoreductase chain 5">
    <location>
        <begin position="1"/>
        <end position="607"/>
    </location>
</feature>
<feature type="transmembrane region" description="Helical" evidence="2">
    <location>
        <begin position="3"/>
        <end position="23"/>
    </location>
</feature>
<feature type="transmembrane region" description="Helical" evidence="2">
    <location>
        <begin position="35"/>
        <end position="55"/>
    </location>
</feature>
<feature type="transmembrane region" description="Helical" evidence="2">
    <location>
        <begin position="84"/>
        <end position="104"/>
    </location>
</feature>
<feature type="transmembrane region" description="Helical" evidence="2">
    <location>
        <begin position="117"/>
        <end position="137"/>
    </location>
</feature>
<feature type="transmembrane region" description="Helical" evidence="2">
    <location>
        <begin position="140"/>
        <end position="160"/>
    </location>
</feature>
<feature type="transmembrane region" description="Helical" evidence="2">
    <location>
        <begin position="171"/>
        <end position="191"/>
    </location>
</feature>
<feature type="transmembrane region" description="Helical" evidence="2">
    <location>
        <begin position="210"/>
        <end position="230"/>
    </location>
</feature>
<feature type="transmembrane region" description="Helical" evidence="2">
    <location>
        <begin position="241"/>
        <end position="261"/>
    </location>
</feature>
<feature type="transmembrane region" description="Helical" evidence="2">
    <location>
        <begin position="272"/>
        <end position="292"/>
    </location>
</feature>
<feature type="transmembrane region" description="Helical" evidence="2">
    <location>
        <begin position="301"/>
        <end position="320"/>
    </location>
</feature>
<feature type="transmembrane region" description="Helical" evidence="2">
    <location>
        <begin position="324"/>
        <end position="344"/>
    </location>
</feature>
<feature type="transmembrane region" description="Helical" evidence="2">
    <location>
        <begin position="365"/>
        <end position="385"/>
    </location>
</feature>
<feature type="transmembrane region" description="Helical" evidence="2">
    <location>
        <begin position="405"/>
        <end position="427"/>
    </location>
</feature>
<feature type="transmembrane region" description="Helical" evidence="2">
    <location>
        <begin position="457"/>
        <end position="477"/>
    </location>
</feature>
<feature type="transmembrane region" description="Helical" evidence="2">
    <location>
        <begin position="482"/>
        <end position="502"/>
    </location>
</feature>
<feature type="transmembrane region" description="Helical" evidence="2">
    <location>
        <begin position="586"/>
        <end position="606"/>
    </location>
</feature>
<feature type="sequence conflict" description="In Ref. 1; AAB48654/CAA24088." evidence="4" ref="1">
    <original>F</original>
    <variation>L</variation>
    <location>
        <position position="103"/>
    </location>
</feature>
<feature type="helix" evidence="10">
    <location>
        <begin position="2"/>
        <end position="22"/>
    </location>
</feature>
<feature type="helix" evidence="10">
    <location>
        <begin position="25"/>
        <end position="29"/>
    </location>
</feature>
<feature type="helix" evidence="10">
    <location>
        <begin position="32"/>
        <end position="57"/>
    </location>
</feature>
<feature type="strand" evidence="10">
    <location>
        <begin position="61"/>
        <end position="71"/>
    </location>
</feature>
<feature type="strand" evidence="10">
    <location>
        <begin position="74"/>
        <end position="83"/>
    </location>
</feature>
<feature type="helix" evidence="10">
    <location>
        <begin position="84"/>
        <end position="107"/>
    </location>
</feature>
<feature type="turn" evidence="10">
    <location>
        <begin position="108"/>
        <end position="110"/>
    </location>
</feature>
<feature type="helix" evidence="10">
    <location>
        <begin position="114"/>
        <end position="133"/>
    </location>
</feature>
<feature type="strand" evidence="10">
    <location>
        <begin position="134"/>
        <end position="136"/>
    </location>
</feature>
<feature type="helix" evidence="10">
    <location>
        <begin position="137"/>
        <end position="155"/>
    </location>
</feature>
<feature type="strand" evidence="6">
    <location>
        <begin position="158"/>
        <end position="160"/>
    </location>
</feature>
<feature type="helix" evidence="10">
    <location>
        <begin position="162"/>
        <end position="192"/>
    </location>
</feature>
<feature type="helix" evidence="10">
    <location>
        <begin position="198"/>
        <end position="201"/>
    </location>
</feature>
<feature type="helix" evidence="10">
    <location>
        <begin position="202"/>
        <end position="204"/>
    </location>
</feature>
<feature type="strand" evidence="8">
    <location>
        <begin position="205"/>
        <end position="207"/>
    </location>
</feature>
<feature type="helix" evidence="10">
    <location>
        <begin position="210"/>
        <end position="223"/>
    </location>
</feature>
<feature type="helix" evidence="7">
    <location>
        <begin position="227"/>
        <end position="229"/>
    </location>
</feature>
<feature type="helix" evidence="10">
    <location>
        <begin position="232"/>
        <end position="235"/>
    </location>
</feature>
<feature type="helix" evidence="10">
    <location>
        <begin position="236"/>
        <end position="238"/>
    </location>
</feature>
<feature type="helix" evidence="10">
    <location>
        <begin position="241"/>
        <end position="246"/>
    </location>
</feature>
<feature type="helix" evidence="10">
    <location>
        <begin position="247"/>
        <end position="251"/>
    </location>
</feature>
<feature type="helix" evidence="10">
    <location>
        <begin position="252"/>
        <end position="254"/>
    </location>
</feature>
<feature type="helix" evidence="10">
    <location>
        <begin position="255"/>
        <end position="262"/>
    </location>
</feature>
<feature type="helix" evidence="10">
    <location>
        <begin position="264"/>
        <end position="267"/>
    </location>
</feature>
<feature type="helix" evidence="10">
    <location>
        <begin position="271"/>
        <end position="292"/>
    </location>
</feature>
<feature type="helix" evidence="10">
    <location>
        <begin position="298"/>
        <end position="318"/>
    </location>
</feature>
<feature type="helix" evidence="10">
    <location>
        <begin position="322"/>
        <end position="349"/>
    </location>
</feature>
<feature type="strand" evidence="7">
    <location>
        <begin position="350"/>
        <end position="352"/>
    </location>
</feature>
<feature type="helix" evidence="10">
    <location>
        <begin position="356"/>
        <end position="358"/>
    </location>
</feature>
<feature type="helix" evidence="10">
    <location>
        <begin position="362"/>
        <end position="365"/>
    </location>
</feature>
<feature type="helix" evidence="10">
    <location>
        <begin position="367"/>
        <end position="380"/>
    </location>
</feature>
<feature type="strand" evidence="7">
    <location>
        <begin position="386"/>
        <end position="388"/>
    </location>
</feature>
<feature type="helix" evidence="10">
    <location>
        <begin position="389"/>
        <end position="400"/>
    </location>
</feature>
<feature type="strand" evidence="11">
    <location>
        <begin position="402"/>
        <end position="404"/>
    </location>
</feature>
<feature type="helix" evidence="10">
    <location>
        <begin position="406"/>
        <end position="430"/>
    </location>
</feature>
<feature type="strand" evidence="12">
    <location>
        <begin position="432"/>
        <end position="434"/>
    </location>
</feature>
<feature type="strand" evidence="10">
    <location>
        <begin position="439"/>
        <end position="441"/>
    </location>
</feature>
<feature type="helix" evidence="10">
    <location>
        <begin position="448"/>
        <end position="471"/>
    </location>
</feature>
<feature type="helix" evidence="10">
    <location>
        <begin position="484"/>
        <end position="487"/>
    </location>
</feature>
<feature type="helix" evidence="10">
    <location>
        <begin position="489"/>
        <end position="506"/>
    </location>
</feature>
<feature type="helix" evidence="10">
    <location>
        <begin position="507"/>
        <end position="509"/>
    </location>
</feature>
<feature type="strand" evidence="9">
    <location>
        <begin position="510"/>
        <end position="512"/>
    </location>
</feature>
<feature type="helix" evidence="10">
    <location>
        <begin position="518"/>
        <end position="524"/>
    </location>
</feature>
<feature type="helix" evidence="10">
    <location>
        <begin position="526"/>
        <end position="528"/>
    </location>
</feature>
<feature type="helix" evidence="10">
    <location>
        <begin position="529"/>
        <end position="547"/>
    </location>
</feature>
<feature type="helix" evidence="10">
    <location>
        <begin position="548"/>
        <end position="556"/>
    </location>
</feature>
<feature type="helix" evidence="10">
    <location>
        <begin position="557"/>
        <end position="561"/>
    </location>
</feature>
<feature type="helix" evidence="10">
    <location>
        <begin position="563"/>
        <end position="578"/>
    </location>
</feature>
<feature type="helix" evidence="10">
    <location>
        <begin position="584"/>
        <end position="604"/>
    </location>
</feature>
<dbReference type="EC" id="7.1.1.2" evidence="1"/>
<dbReference type="EMBL" id="J01420">
    <property type="protein sequence ID" value="AAB48654.1"/>
    <property type="molecule type" value="Genomic_DNA"/>
</dbReference>
<dbReference type="EMBL" id="V00711">
    <property type="protein sequence ID" value="CAA24088.1"/>
    <property type="molecule type" value="Genomic_DNA"/>
</dbReference>
<dbReference type="EMBL" id="AY172335">
    <property type="protein sequence ID" value="AAN85132.1"/>
    <property type="molecule type" value="Genomic_DNA"/>
</dbReference>
<dbReference type="PIR" id="A00451">
    <property type="entry name" value="QXMS5M"/>
</dbReference>
<dbReference type="RefSeq" id="NP_904338.1">
    <property type="nucleotide sequence ID" value="NC_005089.1"/>
</dbReference>
<dbReference type="PDB" id="6G2J">
    <property type="method" value="EM"/>
    <property type="resolution" value="3.30 A"/>
    <property type="chains" value="L=1-607"/>
</dbReference>
<dbReference type="PDB" id="6G72">
    <property type="method" value="EM"/>
    <property type="resolution" value="3.90 A"/>
    <property type="chains" value="L=1-607"/>
</dbReference>
<dbReference type="PDB" id="6ZR2">
    <property type="method" value="EM"/>
    <property type="resolution" value="3.10 A"/>
    <property type="chains" value="L=1-607"/>
</dbReference>
<dbReference type="PDB" id="6ZTQ">
    <property type="method" value="EM"/>
    <property type="resolution" value="3.00 A"/>
    <property type="chains" value="L=1-607"/>
</dbReference>
<dbReference type="PDB" id="7AK5">
    <property type="method" value="EM"/>
    <property type="resolution" value="3.17 A"/>
    <property type="chains" value="L=1-607"/>
</dbReference>
<dbReference type="PDB" id="7AK6">
    <property type="method" value="EM"/>
    <property type="resolution" value="3.82 A"/>
    <property type="chains" value="L=1-607"/>
</dbReference>
<dbReference type="PDB" id="7B93">
    <property type="method" value="EM"/>
    <property type="resolution" value="3.04 A"/>
    <property type="chains" value="L=1-607"/>
</dbReference>
<dbReference type="PDB" id="7PSA">
    <property type="method" value="EM"/>
    <property type="resolution" value="3.40 A"/>
    <property type="chains" value="L=1-607"/>
</dbReference>
<dbReference type="PDB" id="8C2S">
    <property type="method" value="EM"/>
    <property type="resolution" value="3.90 A"/>
    <property type="chains" value="L=1-606"/>
</dbReference>
<dbReference type="PDB" id="8CA3">
    <property type="method" value="EM"/>
    <property type="resolution" value="3.20 A"/>
    <property type="chains" value="L=1-607"/>
</dbReference>
<dbReference type="PDB" id="8CA5">
    <property type="method" value="EM"/>
    <property type="resolution" value="3.90 A"/>
    <property type="chains" value="L=1-607"/>
</dbReference>
<dbReference type="PDB" id="8IAO">
    <property type="method" value="EM"/>
    <property type="resolution" value="4.20 A"/>
    <property type="chains" value="L=1-607"/>
</dbReference>
<dbReference type="PDB" id="8IAQ">
    <property type="method" value="EM"/>
    <property type="resolution" value="3.40 A"/>
    <property type="chains" value="L=1-607"/>
</dbReference>
<dbReference type="PDB" id="8IB4">
    <property type="method" value="EM"/>
    <property type="resolution" value="4.30 A"/>
    <property type="chains" value="L=1-607"/>
</dbReference>
<dbReference type="PDB" id="8IB6">
    <property type="method" value="EM"/>
    <property type="resolution" value="3.30 A"/>
    <property type="chains" value="L=1-607"/>
</dbReference>
<dbReference type="PDB" id="8IB9">
    <property type="method" value="EM"/>
    <property type="resolution" value="4.30 A"/>
    <property type="chains" value="L=1-607"/>
</dbReference>
<dbReference type="PDB" id="8IBB">
    <property type="method" value="EM"/>
    <property type="resolution" value="3.30 A"/>
    <property type="chains" value="L=1-607"/>
</dbReference>
<dbReference type="PDB" id="8IBD">
    <property type="method" value="EM"/>
    <property type="resolution" value="4.20 A"/>
    <property type="chains" value="L=1-607"/>
</dbReference>
<dbReference type="PDB" id="8IBF">
    <property type="method" value="EM"/>
    <property type="resolution" value="3.30 A"/>
    <property type="chains" value="L=1-607"/>
</dbReference>
<dbReference type="PDB" id="8IC2">
    <property type="method" value="EM"/>
    <property type="resolution" value="6.30 A"/>
    <property type="chains" value="L=1-607"/>
</dbReference>
<dbReference type="PDB" id="8IC4">
    <property type="method" value="EM"/>
    <property type="resolution" value="3.20 A"/>
    <property type="chains" value="L=1-607"/>
</dbReference>
<dbReference type="PDB" id="8OLT">
    <property type="method" value="EM"/>
    <property type="resolution" value="2.84 A"/>
    <property type="chains" value="L=1-607"/>
</dbReference>
<dbReference type="PDB" id="8OM1">
    <property type="method" value="EM"/>
    <property type="resolution" value="2.39 A"/>
    <property type="chains" value="L=1-607"/>
</dbReference>
<dbReference type="PDB" id="8PW5">
    <property type="method" value="EM"/>
    <property type="resolution" value="3.60 A"/>
    <property type="chains" value="L1=1-607"/>
</dbReference>
<dbReference type="PDB" id="8PW6">
    <property type="method" value="EM"/>
    <property type="resolution" value="3.30 A"/>
    <property type="chains" value="L1=1-607"/>
</dbReference>
<dbReference type="PDB" id="8PW7">
    <property type="method" value="EM"/>
    <property type="resolution" value="3.50 A"/>
    <property type="chains" value="L1=1-607"/>
</dbReference>
<dbReference type="PDB" id="8RGP">
    <property type="method" value="EM"/>
    <property type="resolution" value="3.00 A"/>
    <property type="chains" value="L=1-607"/>
</dbReference>
<dbReference type="PDB" id="8RGQ">
    <property type="method" value="EM"/>
    <property type="resolution" value="3.00 A"/>
    <property type="chains" value="L=1-607"/>
</dbReference>
<dbReference type="PDB" id="8RGR">
    <property type="method" value="EM"/>
    <property type="resolution" value="2.90 A"/>
    <property type="chains" value="L=1-607"/>
</dbReference>
<dbReference type="PDB" id="8RGT">
    <property type="method" value="EM"/>
    <property type="resolution" value="3.10 A"/>
    <property type="chains" value="L=1-607"/>
</dbReference>
<dbReference type="PDB" id="8UCA">
    <property type="method" value="EM"/>
    <property type="resolution" value="3.70 A"/>
    <property type="chains" value="5/5a=1-607"/>
</dbReference>
<dbReference type="PDBsum" id="6G2J"/>
<dbReference type="PDBsum" id="6G72"/>
<dbReference type="PDBsum" id="6ZR2"/>
<dbReference type="PDBsum" id="6ZTQ"/>
<dbReference type="PDBsum" id="7AK5"/>
<dbReference type="PDBsum" id="7AK6"/>
<dbReference type="PDBsum" id="7B93"/>
<dbReference type="PDBsum" id="7PSA"/>
<dbReference type="PDBsum" id="8C2S"/>
<dbReference type="PDBsum" id="8CA3"/>
<dbReference type="PDBsum" id="8CA5"/>
<dbReference type="PDBsum" id="8IAO"/>
<dbReference type="PDBsum" id="8IAQ"/>
<dbReference type="PDBsum" id="8IB4"/>
<dbReference type="PDBsum" id="8IB6"/>
<dbReference type="PDBsum" id="8IB9"/>
<dbReference type="PDBsum" id="8IBB"/>
<dbReference type="PDBsum" id="8IBD"/>
<dbReference type="PDBsum" id="8IBF"/>
<dbReference type="PDBsum" id="8IC2"/>
<dbReference type="PDBsum" id="8IC4"/>
<dbReference type="PDBsum" id="8OLT"/>
<dbReference type="PDBsum" id="8OM1"/>
<dbReference type="PDBsum" id="8PW5"/>
<dbReference type="PDBsum" id="8PW6"/>
<dbReference type="PDBsum" id="8PW7"/>
<dbReference type="PDBsum" id="8RGP"/>
<dbReference type="PDBsum" id="8RGQ"/>
<dbReference type="PDBsum" id="8RGR"/>
<dbReference type="PDBsum" id="8RGT"/>
<dbReference type="PDBsum" id="8UCA"/>
<dbReference type="EMDB" id="EMD-11377"/>
<dbReference type="EMDB" id="EMD-11424"/>
<dbReference type="EMDB" id="EMD-11810"/>
<dbReference type="EMDB" id="EMD-11811"/>
<dbReference type="EMDB" id="EMD-12095"/>
<dbReference type="EMDB" id="EMD-13611"/>
<dbReference type="EMDB" id="EMD-16398"/>
<dbReference type="EMDB" id="EMD-16516"/>
<dbReference type="EMDB" id="EMD-16518"/>
<dbReference type="EMDB" id="EMD-16962"/>
<dbReference type="EMDB" id="EMD-16965"/>
<dbReference type="EMDB" id="EMD-17989"/>
<dbReference type="EMDB" id="EMD-17990"/>
<dbReference type="EMDB" id="EMD-17991"/>
<dbReference type="EMDB" id="EMD-19145"/>
<dbReference type="EMDB" id="EMD-19146"/>
<dbReference type="EMDB" id="EMD-19147"/>
<dbReference type="EMDB" id="EMD-19148"/>
<dbReference type="EMDB" id="EMD-35313"/>
<dbReference type="EMDB" id="EMD-35315"/>
<dbReference type="EMDB" id="EMD-35331"/>
<dbReference type="EMDB" id="EMD-35333"/>
<dbReference type="EMDB" id="EMD-35336"/>
<dbReference type="EMDB" id="EMD-35338"/>
<dbReference type="EMDB" id="EMD-35340"/>
<dbReference type="EMDB" id="EMD-35342"/>
<dbReference type="EMDB" id="EMD-35352"/>
<dbReference type="EMDB" id="EMD-35354"/>
<dbReference type="EMDB" id="EMD-42122"/>
<dbReference type="EMDB" id="EMD-4345"/>
<dbReference type="EMDB" id="EMD-4356"/>
<dbReference type="SMR" id="P03921"/>
<dbReference type="ComplexPortal" id="CPX-266">
    <property type="entry name" value="Mitochondrial respiratory chain complex I"/>
</dbReference>
<dbReference type="FunCoup" id="P03921">
    <property type="interactions" value="218"/>
</dbReference>
<dbReference type="IntAct" id="P03921">
    <property type="interactions" value="6"/>
</dbReference>
<dbReference type="MINT" id="P03921"/>
<dbReference type="STRING" id="10090.ENSMUSP00000081001"/>
<dbReference type="GlyGen" id="P03921">
    <property type="glycosylation" value="3 sites, 1 N-linked glycan (1 site), 1 O-linked glycan (1 site)"/>
</dbReference>
<dbReference type="iPTMnet" id="P03921"/>
<dbReference type="MetOSite" id="P03921"/>
<dbReference type="PhosphoSitePlus" id="P03921"/>
<dbReference type="SwissPalm" id="P03921"/>
<dbReference type="jPOST" id="P03921"/>
<dbReference type="PaxDb" id="10090-ENSMUSP00000081001"/>
<dbReference type="PeptideAtlas" id="P03921"/>
<dbReference type="ProteomicsDB" id="287844"/>
<dbReference type="Pumba" id="P03921"/>
<dbReference type="TopDownProteomics" id="P03921"/>
<dbReference type="Antibodypedia" id="35363">
    <property type="antibodies" value="244 antibodies from 29 providers"/>
</dbReference>
<dbReference type="Ensembl" id="ENSMUST00000082418.1">
    <property type="protein sequence ID" value="ENSMUSP00000081001.1"/>
    <property type="gene ID" value="ENSMUSG00000064367.1"/>
</dbReference>
<dbReference type="GeneID" id="17721"/>
<dbReference type="KEGG" id="mmu:17721"/>
<dbReference type="AGR" id="MGI:102496"/>
<dbReference type="CTD" id="4540"/>
<dbReference type="MGI" id="MGI:102496">
    <property type="gene designation" value="mt-Nd5"/>
</dbReference>
<dbReference type="VEuPathDB" id="HostDB:ENSMUSG00000064367"/>
<dbReference type="eggNOG" id="KOG4668">
    <property type="taxonomic scope" value="Eukaryota"/>
</dbReference>
<dbReference type="GeneTree" id="ENSGT00730000111303"/>
<dbReference type="HOGENOM" id="CLU_007100_6_0_1"/>
<dbReference type="InParanoid" id="P03921"/>
<dbReference type="OMA" id="GVGIMSF"/>
<dbReference type="OrthoDB" id="10069788at2759"/>
<dbReference type="PhylomeDB" id="P03921"/>
<dbReference type="Reactome" id="R-MMU-611105">
    <property type="pathway name" value="Respiratory electron transport"/>
</dbReference>
<dbReference type="Reactome" id="R-MMU-6799198">
    <property type="pathway name" value="Complex I biogenesis"/>
</dbReference>
<dbReference type="ChiTaRS" id="mt-Nd5">
    <property type="organism name" value="mouse"/>
</dbReference>
<dbReference type="PRO" id="PR:P03921"/>
<dbReference type="Proteomes" id="UP000000589">
    <property type="component" value="Mitochondrion MT"/>
</dbReference>
<dbReference type="RNAct" id="P03921">
    <property type="molecule type" value="protein"/>
</dbReference>
<dbReference type="Bgee" id="ENSMUSG00000064367">
    <property type="expression patterns" value="Expressed in central gray substance of midbrain and 247 other cell types or tissues"/>
</dbReference>
<dbReference type="ExpressionAtlas" id="P03921">
    <property type="expression patterns" value="baseline and differential"/>
</dbReference>
<dbReference type="GO" id="GO:0005743">
    <property type="term" value="C:mitochondrial inner membrane"/>
    <property type="evidence" value="ECO:0000314"/>
    <property type="project" value="UniProtKB"/>
</dbReference>
<dbReference type="GO" id="GO:0005739">
    <property type="term" value="C:mitochondrion"/>
    <property type="evidence" value="ECO:0007005"/>
    <property type="project" value="MGI"/>
</dbReference>
<dbReference type="GO" id="GO:0045271">
    <property type="term" value="C:respiratory chain complex I"/>
    <property type="evidence" value="ECO:0000314"/>
    <property type="project" value="UniProtKB"/>
</dbReference>
<dbReference type="GO" id="GO:0008137">
    <property type="term" value="F:NADH dehydrogenase (ubiquinone) activity"/>
    <property type="evidence" value="ECO:0000250"/>
    <property type="project" value="UniProtKB"/>
</dbReference>
<dbReference type="GO" id="GO:0009060">
    <property type="term" value="P:aerobic respiration"/>
    <property type="evidence" value="ECO:0000303"/>
    <property type="project" value="ComplexPortal"/>
</dbReference>
<dbReference type="GO" id="GO:0006120">
    <property type="term" value="P:mitochondrial electron transport, NADH to ubiquinone"/>
    <property type="evidence" value="ECO:0000250"/>
    <property type="project" value="UniProtKB"/>
</dbReference>
<dbReference type="GO" id="GO:0032981">
    <property type="term" value="P:mitochondrial respiratory chain complex I assembly"/>
    <property type="evidence" value="ECO:0000250"/>
    <property type="project" value="UniProtKB"/>
</dbReference>
<dbReference type="GO" id="GO:0042776">
    <property type="term" value="P:proton motive force-driven mitochondrial ATP synthesis"/>
    <property type="evidence" value="ECO:0000303"/>
    <property type="project" value="ComplexPortal"/>
</dbReference>
<dbReference type="InterPro" id="IPR010934">
    <property type="entry name" value="NADH_DH_su5_C"/>
</dbReference>
<dbReference type="InterPro" id="IPR018393">
    <property type="entry name" value="NADHpl_OxRdtase_5_subgr"/>
</dbReference>
<dbReference type="InterPro" id="IPR001750">
    <property type="entry name" value="ND/Mrp_TM"/>
</dbReference>
<dbReference type="InterPro" id="IPR003945">
    <property type="entry name" value="NU5C-like"/>
</dbReference>
<dbReference type="InterPro" id="IPR001516">
    <property type="entry name" value="Proton_antipo_N"/>
</dbReference>
<dbReference type="NCBIfam" id="TIGR01974">
    <property type="entry name" value="NDH_I_L"/>
    <property type="match status" value="1"/>
</dbReference>
<dbReference type="PANTHER" id="PTHR42829">
    <property type="entry name" value="NADH-UBIQUINONE OXIDOREDUCTASE CHAIN 5"/>
    <property type="match status" value="1"/>
</dbReference>
<dbReference type="PANTHER" id="PTHR42829:SF2">
    <property type="entry name" value="NADH-UBIQUINONE OXIDOREDUCTASE CHAIN 5"/>
    <property type="match status" value="1"/>
</dbReference>
<dbReference type="Pfam" id="PF06455">
    <property type="entry name" value="NADH5_C"/>
    <property type="match status" value="1"/>
</dbReference>
<dbReference type="Pfam" id="PF00361">
    <property type="entry name" value="Proton_antipo_M"/>
    <property type="match status" value="1"/>
</dbReference>
<dbReference type="Pfam" id="PF00662">
    <property type="entry name" value="Proton_antipo_N"/>
    <property type="match status" value="1"/>
</dbReference>
<dbReference type="PRINTS" id="PR01434">
    <property type="entry name" value="NADHDHGNASE5"/>
</dbReference>
<sequence>MNIFTTSILLIFILLLSPILISMSNLIKHINFPLYTTTSIKFSFIISLLPLLMFFHNNMEYMITTWHWVTMNSMELKMSFKTDFFSILFTSVALFVTWSIMQFSSWYMHSDPNINRFIKYLTLFLITMLILTSANNMFQLFIGWEGVGIMSFLLIGWWYGRTDANTAALQAILYNRIGDIGFILAMVWFSLNMNSWELQQIMFSNNNDNLIPLMGLLIAATGKSAQFGLHPWLPSAMEGPTPVSALLHSSTMVVAGIFLLVRFHPLTTNNNFILTTMLCLGALTTLFTAICALTQNDIKKIIAFSTSSQLGLMMVTLGMNQPHLAFLHICTHAFFKAMLFMCSGSIIHSLADEQDIRKMGNITKIMPFTSSCLVIGSLALTGMPFLTGFYSKDLIIEAINTCNTNAWALLITLIATSMTAMYSMRIIYFVTMTKPRFPPLISINENDPDLMNPIKRLAFGSIFAGFVISYNIPPTSIPVLTMPWFLKTTALIISVLGFLIALELNNLTMKLSMNKANPYSSFSTLLGFFPSIIHRITPMKSLNLSLKTSLTLLDLIWLEKTIPKSTSTLHTNMTTLTTNQKGLIKLYFMSFLINIILIIILYSINLE</sequence>
<gene>
    <name type="primary">Mtnd5</name>
    <name type="synonym">mt-Nd5</name>
    <name type="synonym">Nd5</name>
</gene>
<evidence type="ECO:0000250" key="1">
    <source>
        <dbReference type="UniProtKB" id="P03915"/>
    </source>
</evidence>
<evidence type="ECO:0000255" key="2"/>
<evidence type="ECO:0000269" key="3">
    <source>
    </source>
</evidence>
<evidence type="ECO:0000305" key="4"/>
<evidence type="ECO:0007744" key="5">
    <source>
        <dbReference type="PDB" id="8PW5"/>
    </source>
</evidence>
<evidence type="ECO:0007829" key="6">
    <source>
        <dbReference type="PDB" id="6G2J"/>
    </source>
</evidence>
<evidence type="ECO:0007829" key="7">
    <source>
        <dbReference type="PDB" id="6ZTQ"/>
    </source>
</evidence>
<evidence type="ECO:0007829" key="8">
    <source>
        <dbReference type="PDB" id="7AK5"/>
    </source>
</evidence>
<evidence type="ECO:0007829" key="9">
    <source>
        <dbReference type="PDB" id="7B93"/>
    </source>
</evidence>
<evidence type="ECO:0007829" key="10">
    <source>
        <dbReference type="PDB" id="8OM1"/>
    </source>
</evidence>
<evidence type="ECO:0007829" key="11">
    <source>
        <dbReference type="PDB" id="8RGP"/>
    </source>
</evidence>
<evidence type="ECO:0007829" key="12">
    <source>
        <dbReference type="PDB" id="8RGQ"/>
    </source>
</evidence>
<proteinExistence type="evidence at protein level"/>